<organism>
    <name type="scientific">Legionella pneumophila (strain Corby)</name>
    <dbReference type="NCBI Taxonomy" id="400673"/>
    <lineage>
        <taxon>Bacteria</taxon>
        <taxon>Pseudomonadati</taxon>
        <taxon>Pseudomonadota</taxon>
        <taxon>Gammaproteobacteria</taxon>
        <taxon>Legionellales</taxon>
        <taxon>Legionellaceae</taxon>
        <taxon>Legionella</taxon>
    </lineage>
</organism>
<sequence>MIQMQTVLEVADNSGARKVMCIKVLGGSHRRYARVGDVIKVGVKDAIPRSKVKKGAVMRAVVVRTAQGVRRDDGSLIRFDDNAAVLLNNQNEPIGTRIFGPVTRELRERFMKIISLAAEVL</sequence>
<reference key="1">
    <citation type="submission" date="2006-11" db="EMBL/GenBank/DDBJ databases">
        <title>Identification and characterization of a new conjugation/ type IVA secretion system (trb/tra) of L. pneumophila Corby localized on a mobile genomic island.</title>
        <authorList>
            <person name="Gloeckner G."/>
            <person name="Albert-Weissenberger C."/>
            <person name="Weinmann E."/>
            <person name="Jacobi S."/>
            <person name="Schunder E."/>
            <person name="Steinert M."/>
            <person name="Buchrieser C."/>
            <person name="Hacker J."/>
            <person name="Heuner K."/>
        </authorList>
    </citation>
    <scope>NUCLEOTIDE SEQUENCE [LARGE SCALE GENOMIC DNA]</scope>
    <source>
        <strain>Corby</strain>
    </source>
</reference>
<evidence type="ECO:0000255" key="1">
    <source>
        <dbReference type="HAMAP-Rule" id="MF_01367"/>
    </source>
</evidence>
<evidence type="ECO:0000305" key="2"/>
<protein>
    <recommendedName>
        <fullName evidence="1">Large ribosomal subunit protein uL14</fullName>
    </recommendedName>
    <alternativeName>
        <fullName evidence="2">50S ribosomal protein L14</fullName>
    </alternativeName>
</protein>
<dbReference type="EMBL" id="CP000675">
    <property type="protein sequence ID" value="ABQ56904.1"/>
    <property type="molecule type" value="Genomic_DNA"/>
</dbReference>
<dbReference type="RefSeq" id="WP_011945547.1">
    <property type="nucleotide sequence ID" value="NC_009494.2"/>
</dbReference>
<dbReference type="SMR" id="A5IHQ4"/>
<dbReference type="KEGG" id="lpc:LPC_3003"/>
<dbReference type="HOGENOM" id="CLU_095071_2_1_6"/>
<dbReference type="GO" id="GO:0022625">
    <property type="term" value="C:cytosolic large ribosomal subunit"/>
    <property type="evidence" value="ECO:0007669"/>
    <property type="project" value="TreeGrafter"/>
</dbReference>
<dbReference type="GO" id="GO:0070180">
    <property type="term" value="F:large ribosomal subunit rRNA binding"/>
    <property type="evidence" value="ECO:0007669"/>
    <property type="project" value="TreeGrafter"/>
</dbReference>
<dbReference type="GO" id="GO:0003735">
    <property type="term" value="F:structural constituent of ribosome"/>
    <property type="evidence" value="ECO:0007669"/>
    <property type="project" value="InterPro"/>
</dbReference>
<dbReference type="GO" id="GO:0006412">
    <property type="term" value="P:translation"/>
    <property type="evidence" value="ECO:0007669"/>
    <property type="project" value="UniProtKB-UniRule"/>
</dbReference>
<dbReference type="CDD" id="cd00337">
    <property type="entry name" value="Ribosomal_uL14"/>
    <property type="match status" value="1"/>
</dbReference>
<dbReference type="FunFam" id="2.40.150.20:FF:000001">
    <property type="entry name" value="50S ribosomal protein L14"/>
    <property type="match status" value="1"/>
</dbReference>
<dbReference type="Gene3D" id="2.40.150.20">
    <property type="entry name" value="Ribosomal protein L14"/>
    <property type="match status" value="1"/>
</dbReference>
<dbReference type="HAMAP" id="MF_01367">
    <property type="entry name" value="Ribosomal_uL14"/>
    <property type="match status" value="1"/>
</dbReference>
<dbReference type="InterPro" id="IPR000218">
    <property type="entry name" value="Ribosomal_uL14"/>
</dbReference>
<dbReference type="InterPro" id="IPR005745">
    <property type="entry name" value="Ribosomal_uL14_bac-type"/>
</dbReference>
<dbReference type="InterPro" id="IPR019972">
    <property type="entry name" value="Ribosomal_uL14_CS"/>
</dbReference>
<dbReference type="InterPro" id="IPR036853">
    <property type="entry name" value="Ribosomal_uL14_sf"/>
</dbReference>
<dbReference type="NCBIfam" id="TIGR01067">
    <property type="entry name" value="rplN_bact"/>
    <property type="match status" value="1"/>
</dbReference>
<dbReference type="PANTHER" id="PTHR11761">
    <property type="entry name" value="50S/60S RIBOSOMAL PROTEIN L14/L23"/>
    <property type="match status" value="1"/>
</dbReference>
<dbReference type="PANTHER" id="PTHR11761:SF3">
    <property type="entry name" value="LARGE RIBOSOMAL SUBUNIT PROTEIN UL14M"/>
    <property type="match status" value="1"/>
</dbReference>
<dbReference type="Pfam" id="PF00238">
    <property type="entry name" value="Ribosomal_L14"/>
    <property type="match status" value="1"/>
</dbReference>
<dbReference type="SMART" id="SM01374">
    <property type="entry name" value="Ribosomal_L14"/>
    <property type="match status" value="1"/>
</dbReference>
<dbReference type="SUPFAM" id="SSF50193">
    <property type="entry name" value="Ribosomal protein L14"/>
    <property type="match status" value="1"/>
</dbReference>
<dbReference type="PROSITE" id="PS00049">
    <property type="entry name" value="RIBOSOMAL_L14"/>
    <property type="match status" value="1"/>
</dbReference>
<feature type="chain" id="PRO_1000055615" description="Large ribosomal subunit protein uL14">
    <location>
        <begin position="1"/>
        <end position="121"/>
    </location>
</feature>
<accession>A5IHQ4</accession>
<keyword id="KW-0687">Ribonucleoprotein</keyword>
<keyword id="KW-0689">Ribosomal protein</keyword>
<keyword id="KW-0694">RNA-binding</keyword>
<keyword id="KW-0699">rRNA-binding</keyword>
<name>RL14_LEGPC</name>
<comment type="function">
    <text evidence="1">Binds to 23S rRNA. Forms part of two intersubunit bridges in the 70S ribosome.</text>
</comment>
<comment type="subunit">
    <text evidence="1">Part of the 50S ribosomal subunit. Forms a cluster with proteins L3 and L19. In the 70S ribosome, L14 and L19 interact and together make contacts with the 16S rRNA in bridges B5 and B8.</text>
</comment>
<comment type="similarity">
    <text evidence="1">Belongs to the universal ribosomal protein uL14 family.</text>
</comment>
<proteinExistence type="inferred from homology"/>
<gene>
    <name evidence="1" type="primary">rplN</name>
    <name type="ordered locus">LPC_3003</name>
</gene>